<evidence type="ECO:0000255" key="1">
    <source>
        <dbReference type="HAMAP-Rule" id="MF_00379"/>
    </source>
</evidence>
<organism>
    <name type="scientific">Pseudomonas putida</name>
    <name type="common">Arthrobacter siderocapsulatus</name>
    <dbReference type="NCBI Taxonomy" id="303"/>
    <lineage>
        <taxon>Bacteria</taxon>
        <taxon>Pseudomonadati</taxon>
        <taxon>Pseudomonadota</taxon>
        <taxon>Gammaproteobacteria</taxon>
        <taxon>Pseudomonadales</taxon>
        <taxon>Pseudomonadaceae</taxon>
        <taxon>Pseudomonas</taxon>
    </lineage>
</organism>
<dbReference type="EC" id="3.6.-.-" evidence="1"/>
<dbReference type="EMBL" id="X62540">
    <property type="protein sequence ID" value="CAA44418.1"/>
    <property type="molecule type" value="Genomic_DNA"/>
</dbReference>
<dbReference type="PIR" id="JQ1222">
    <property type="entry name" value="JQ1222"/>
</dbReference>
<dbReference type="RefSeq" id="WP_010951424.1">
    <property type="nucleotide sequence ID" value="NZ_SPUU01000003.1"/>
</dbReference>
<dbReference type="SMR" id="P0A176"/>
<dbReference type="GeneID" id="83683238"/>
<dbReference type="PATRIC" id="fig|303.175.peg.30"/>
<dbReference type="eggNOG" id="COG0486">
    <property type="taxonomic scope" value="Bacteria"/>
</dbReference>
<dbReference type="OMA" id="EFHCHGG"/>
<dbReference type="GO" id="GO:0005829">
    <property type="term" value="C:cytosol"/>
    <property type="evidence" value="ECO:0007669"/>
    <property type="project" value="TreeGrafter"/>
</dbReference>
<dbReference type="GO" id="GO:0005525">
    <property type="term" value="F:GTP binding"/>
    <property type="evidence" value="ECO:0007669"/>
    <property type="project" value="UniProtKB-UniRule"/>
</dbReference>
<dbReference type="GO" id="GO:0003924">
    <property type="term" value="F:GTPase activity"/>
    <property type="evidence" value="ECO:0007669"/>
    <property type="project" value="UniProtKB-UniRule"/>
</dbReference>
<dbReference type="GO" id="GO:0046872">
    <property type="term" value="F:metal ion binding"/>
    <property type="evidence" value="ECO:0007669"/>
    <property type="project" value="UniProtKB-KW"/>
</dbReference>
<dbReference type="GO" id="GO:0030488">
    <property type="term" value="P:tRNA methylation"/>
    <property type="evidence" value="ECO:0007669"/>
    <property type="project" value="TreeGrafter"/>
</dbReference>
<dbReference type="GO" id="GO:0002098">
    <property type="term" value="P:tRNA wobble uridine modification"/>
    <property type="evidence" value="ECO:0007669"/>
    <property type="project" value="TreeGrafter"/>
</dbReference>
<dbReference type="CDD" id="cd04164">
    <property type="entry name" value="trmE"/>
    <property type="match status" value="1"/>
</dbReference>
<dbReference type="CDD" id="cd14858">
    <property type="entry name" value="TrmE_N"/>
    <property type="match status" value="1"/>
</dbReference>
<dbReference type="FunFam" id="3.30.1360.120:FF:000001">
    <property type="entry name" value="tRNA modification GTPase MnmE"/>
    <property type="match status" value="1"/>
</dbReference>
<dbReference type="FunFam" id="3.40.50.300:FF:000249">
    <property type="entry name" value="tRNA modification GTPase MnmE"/>
    <property type="match status" value="1"/>
</dbReference>
<dbReference type="Gene3D" id="3.40.50.300">
    <property type="entry name" value="P-loop containing nucleotide triphosphate hydrolases"/>
    <property type="match status" value="1"/>
</dbReference>
<dbReference type="Gene3D" id="3.30.1360.120">
    <property type="entry name" value="Probable tRNA modification gtpase trme, domain 1"/>
    <property type="match status" value="1"/>
</dbReference>
<dbReference type="Gene3D" id="1.20.120.430">
    <property type="entry name" value="tRNA modification GTPase MnmE domain 2"/>
    <property type="match status" value="1"/>
</dbReference>
<dbReference type="HAMAP" id="MF_00379">
    <property type="entry name" value="GTPase_MnmE"/>
    <property type="match status" value="1"/>
</dbReference>
<dbReference type="InterPro" id="IPR031168">
    <property type="entry name" value="G_TrmE"/>
</dbReference>
<dbReference type="InterPro" id="IPR006073">
    <property type="entry name" value="GTP-bd"/>
</dbReference>
<dbReference type="InterPro" id="IPR018948">
    <property type="entry name" value="GTP-bd_TrmE_N"/>
</dbReference>
<dbReference type="InterPro" id="IPR004520">
    <property type="entry name" value="GTPase_MnmE"/>
</dbReference>
<dbReference type="InterPro" id="IPR027368">
    <property type="entry name" value="MnmE_dom2"/>
</dbReference>
<dbReference type="InterPro" id="IPR025867">
    <property type="entry name" value="MnmE_helical"/>
</dbReference>
<dbReference type="InterPro" id="IPR027417">
    <property type="entry name" value="P-loop_NTPase"/>
</dbReference>
<dbReference type="InterPro" id="IPR005225">
    <property type="entry name" value="Small_GTP-bd"/>
</dbReference>
<dbReference type="InterPro" id="IPR027266">
    <property type="entry name" value="TrmE/GcvT_dom1"/>
</dbReference>
<dbReference type="NCBIfam" id="TIGR00450">
    <property type="entry name" value="mnmE_trmE_thdF"/>
    <property type="match status" value="1"/>
</dbReference>
<dbReference type="NCBIfam" id="NF003661">
    <property type="entry name" value="PRK05291.1-3"/>
    <property type="match status" value="1"/>
</dbReference>
<dbReference type="NCBIfam" id="TIGR00231">
    <property type="entry name" value="small_GTP"/>
    <property type="match status" value="1"/>
</dbReference>
<dbReference type="PANTHER" id="PTHR42714">
    <property type="entry name" value="TRNA MODIFICATION GTPASE GTPBP3"/>
    <property type="match status" value="1"/>
</dbReference>
<dbReference type="PANTHER" id="PTHR42714:SF2">
    <property type="entry name" value="TRNA MODIFICATION GTPASE GTPBP3, MITOCHONDRIAL"/>
    <property type="match status" value="1"/>
</dbReference>
<dbReference type="Pfam" id="PF01926">
    <property type="entry name" value="MMR_HSR1"/>
    <property type="match status" value="1"/>
</dbReference>
<dbReference type="Pfam" id="PF12631">
    <property type="entry name" value="MnmE_helical"/>
    <property type="match status" value="1"/>
</dbReference>
<dbReference type="Pfam" id="PF10396">
    <property type="entry name" value="TrmE_N"/>
    <property type="match status" value="1"/>
</dbReference>
<dbReference type="SUPFAM" id="SSF52540">
    <property type="entry name" value="P-loop containing nucleoside triphosphate hydrolases"/>
    <property type="match status" value="1"/>
</dbReference>
<dbReference type="SUPFAM" id="SSF116878">
    <property type="entry name" value="TrmE connector domain"/>
    <property type="match status" value="1"/>
</dbReference>
<dbReference type="PROSITE" id="PS51709">
    <property type="entry name" value="G_TRME"/>
    <property type="match status" value="1"/>
</dbReference>
<proteinExistence type="inferred from homology"/>
<feature type="chain" id="PRO_0000188906" description="tRNA modification GTPase MnmE">
    <location>
        <begin position="1"/>
        <end position="456"/>
    </location>
</feature>
<feature type="domain" description="TrmE-type G">
    <location>
        <begin position="216"/>
        <end position="379"/>
    </location>
</feature>
<feature type="binding site" evidence="1">
    <location>
        <position position="24"/>
    </location>
    <ligand>
        <name>(6S)-5-formyl-5,6,7,8-tetrahydrofolate</name>
        <dbReference type="ChEBI" id="CHEBI:57457"/>
    </ligand>
</feature>
<feature type="binding site" evidence="1">
    <location>
        <position position="81"/>
    </location>
    <ligand>
        <name>(6S)-5-formyl-5,6,7,8-tetrahydrofolate</name>
        <dbReference type="ChEBI" id="CHEBI:57457"/>
    </ligand>
</feature>
<feature type="binding site" evidence="1">
    <location>
        <position position="120"/>
    </location>
    <ligand>
        <name>(6S)-5-formyl-5,6,7,8-tetrahydrofolate</name>
        <dbReference type="ChEBI" id="CHEBI:57457"/>
    </ligand>
</feature>
<feature type="binding site" evidence="1">
    <location>
        <begin position="226"/>
        <end position="231"/>
    </location>
    <ligand>
        <name>GTP</name>
        <dbReference type="ChEBI" id="CHEBI:37565"/>
    </ligand>
</feature>
<feature type="binding site" evidence="1">
    <location>
        <position position="226"/>
    </location>
    <ligand>
        <name>K(+)</name>
        <dbReference type="ChEBI" id="CHEBI:29103"/>
    </ligand>
</feature>
<feature type="binding site" evidence="1">
    <location>
        <position position="230"/>
    </location>
    <ligand>
        <name>Mg(2+)</name>
        <dbReference type="ChEBI" id="CHEBI:18420"/>
    </ligand>
</feature>
<feature type="binding site" evidence="1">
    <location>
        <begin position="245"/>
        <end position="251"/>
    </location>
    <ligand>
        <name>GTP</name>
        <dbReference type="ChEBI" id="CHEBI:37565"/>
    </ligand>
</feature>
<feature type="binding site" evidence="1">
    <location>
        <position position="245"/>
    </location>
    <ligand>
        <name>K(+)</name>
        <dbReference type="ChEBI" id="CHEBI:29103"/>
    </ligand>
</feature>
<feature type="binding site" evidence="1">
    <location>
        <position position="247"/>
    </location>
    <ligand>
        <name>K(+)</name>
        <dbReference type="ChEBI" id="CHEBI:29103"/>
    </ligand>
</feature>
<feature type="binding site" evidence="1">
    <location>
        <position position="250"/>
    </location>
    <ligand>
        <name>K(+)</name>
        <dbReference type="ChEBI" id="CHEBI:29103"/>
    </ligand>
</feature>
<feature type="binding site" evidence="1">
    <location>
        <position position="251"/>
    </location>
    <ligand>
        <name>Mg(2+)</name>
        <dbReference type="ChEBI" id="CHEBI:18420"/>
    </ligand>
</feature>
<feature type="binding site" evidence="1">
    <location>
        <begin position="270"/>
        <end position="273"/>
    </location>
    <ligand>
        <name>GTP</name>
        <dbReference type="ChEBI" id="CHEBI:37565"/>
    </ligand>
</feature>
<feature type="binding site" evidence="1">
    <location>
        <begin position="335"/>
        <end position="338"/>
    </location>
    <ligand>
        <name>GTP</name>
        <dbReference type="ChEBI" id="CHEBI:37565"/>
    </ligand>
</feature>
<feature type="binding site" evidence="1">
    <location>
        <position position="456"/>
    </location>
    <ligand>
        <name>(6S)-5-formyl-5,6,7,8-tetrahydrofolate</name>
        <dbReference type="ChEBI" id="CHEBI:57457"/>
    </ligand>
</feature>
<gene>
    <name evidence="1" type="primary">mnmE</name>
    <name evidence="1" type="synonym">thdF</name>
    <name evidence="1" type="synonym">trmE</name>
</gene>
<accession>P0A176</accession>
<accession>P25755</accession>
<keyword id="KW-0963">Cytoplasm</keyword>
<keyword id="KW-0342">GTP-binding</keyword>
<keyword id="KW-0378">Hydrolase</keyword>
<keyword id="KW-0460">Magnesium</keyword>
<keyword id="KW-0479">Metal-binding</keyword>
<keyword id="KW-0547">Nucleotide-binding</keyword>
<keyword id="KW-0630">Potassium</keyword>
<keyword id="KW-0819">tRNA processing</keyword>
<sequence length="456" mass="48963">MNTVRETIAAIATAQGRGGVGIVRLSGPLAAKAGLLITGRTLTPRHAHYGPFRDDEGLVLDEGIALFFPGPNSFTGEDVLELQGHGGPVVLDMLLQRCVQVGCRLARPGEFSERAFLNDKLDLAQAEAIADLIEASSSQAARNALRSLQGEFSRRVHSLTEALIALRIYVEAAIDFPEEEIDFLADGHVLSMLDAVRSELSTVQREAGQGALLRDGMTVVIAGRPNAGKSSLLNQLAGREAAIVTDIAGTTRDILREHIHIDGMPLHVVDTAGLRDTDDHVEKIGVERALKAIGEADRVLLVVDSTAPEASDPFALWPEFLAQRPDPAKVTLIRNKADLSGERVALEQCDDGHVTITLSAKGDDTGLQLLRDHLKGCMGYEQTAESGFSARRRHLDALRQASEHLEHGRAQLTLAGAGELLAEDLRQAQHALGEITGAFSSDDLLGRIFSSFCIGK</sequence>
<name>MNME_PSEPU</name>
<reference key="1">
    <citation type="journal article" date="1992" name="Mol. Microbiol.">
        <title>Genes and their organization in the replication origin region of the bacterial chromosome.</title>
        <authorList>
            <person name="Ogasawara N."/>
            <person name="Yoshikawa H."/>
        </authorList>
    </citation>
    <scope>NUCLEOTIDE SEQUENCE [GENOMIC DNA]</scope>
    <source>
        <strain>TN2100</strain>
    </source>
</reference>
<protein>
    <recommendedName>
        <fullName evidence="1">tRNA modification GTPase MnmE</fullName>
        <ecNumber evidence="1">3.6.-.-</ecNumber>
    </recommendedName>
</protein>
<comment type="function">
    <text evidence="1">Exhibits a very high intrinsic GTPase hydrolysis rate. Involved in the addition of a carboxymethylaminomethyl (cmnm) group at the wobble position (U34) of certain tRNAs, forming tRNA-cmnm(5)s(2)U34.</text>
</comment>
<comment type="cofactor">
    <cofactor evidence="1">
        <name>K(+)</name>
        <dbReference type="ChEBI" id="CHEBI:29103"/>
    </cofactor>
    <text evidence="1">Binds 1 potassium ion per subunit.</text>
</comment>
<comment type="subunit">
    <text evidence="1">Homodimer. Heterotetramer of two MnmE and two MnmG subunits.</text>
</comment>
<comment type="subcellular location">
    <subcellularLocation>
        <location evidence="1">Cytoplasm</location>
    </subcellularLocation>
</comment>
<comment type="similarity">
    <text evidence="1">Belongs to the TRAFAC class TrmE-Era-EngA-EngB-Septin-like GTPase superfamily. TrmE GTPase family.</text>
</comment>